<evidence type="ECO:0000255" key="1">
    <source>
        <dbReference type="HAMAP-Rule" id="MF_01633"/>
    </source>
</evidence>
<proteinExistence type="inferred from homology"/>
<name>QUEC_HELPH</name>
<accession>Q1CTN3</accession>
<reference key="1">
    <citation type="journal article" date="2006" name="Proc. Natl. Acad. Sci. U.S.A.">
        <title>The complete genome sequence of a chronic atrophic gastritis Helicobacter pylori strain: evolution during disease progression.</title>
        <authorList>
            <person name="Oh J.D."/>
            <person name="Kling-Baeckhed H."/>
            <person name="Giannakis M."/>
            <person name="Xu J."/>
            <person name="Fulton R.S."/>
            <person name="Fulton L.A."/>
            <person name="Cordum H.S."/>
            <person name="Wang C."/>
            <person name="Elliott G."/>
            <person name="Edwards J."/>
            <person name="Mardis E.R."/>
            <person name="Engstrand L.G."/>
            <person name="Gordon J.I."/>
        </authorList>
    </citation>
    <scope>NUCLEOTIDE SEQUENCE [LARGE SCALE GENOMIC DNA]</scope>
    <source>
        <strain>HPAG1</strain>
    </source>
</reference>
<comment type="function">
    <text evidence="1">Catalyzes the ATP-dependent conversion of 7-carboxy-7-deazaguanine (CDG) to 7-cyano-7-deazaguanine (preQ(0)).</text>
</comment>
<comment type="catalytic activity">
    <reaction evidence="1">
        <text>7-carboxy-7-deazaguanine + NH4(+) + ATP = 7-cyano-7-deazaguanine + ADP + phosphate + H2O + H(+)</text>
        <dbReference type="Rhea" id="RHEA:27982"/>
        <dbReference type="ChEBI" id="CHEBI:15377"/>
        <dbReference type="ChEBI" id="CHEBI:15378"/>
        <dbReference type="ChEBI" id="CHEBI:28938"/>
        <dbReference type="ChEBI" id="CHEBI:30616"/>
        <dbReference type="ChEBI" id="CHEBI:43474"/>
        <dbReference type="ChEBI" id="CHEBI:45075"/>
        <dbReference type="ChEBI" id="CHEBI:61036"/>
        <dbReference type="ChEBI" id="CHEBI:456216"/>
        <dbReference type="EC" id="6.3.4.20"/>
    </reaction>
</comment>
<comment type="cofactor">
    <cofactor evidence="1">
        <name>Zn(2+)</name>
        <dbReference type="ChEBI" id="CHEBI:29105"/>
    </cofactor>
    <text evidence="1">Binds 1 zinc ion per subunit.</text>
</comment>
<comment type="pathway">
    <text evidence="1">Purine metabolism; 7-cyano-7-deazaguanine biosynthesis.</text>
</comment>
<comment type="similarity">
    <text evidence="1">Belongs to the QueC family.</text>
</comment>
<sequence>MEQEICVVSFSGGQDSTTLAVWAKKRFKKVYLVGFDYAQKHSVELECAQKIASLLQLPYEIISLDFLENITRSALFKNSNDLMGHSHVQNKDLPNSFVPNRNAIFITLLHSYAQKIGASNIALGVSQADFSGYPDCKEDFIKSIEHALNLGSNTAIKILTPLMFLNKAQEFQMAKDLGVLDLVIKETHTCYQGERKILHAYGYGCNECPACQLRKKGYEEFQTKVLFQ</sequence>
<protein>
    <recommendedName>
        <fullName evidence="1">7-cyano-7-deazaguanine synthase</fullName>
        <ecNumber evidence="1">6.3.4.20</ecNumber>
    </recommendedName>
    <alternativeName>
        <fullName evidence="1">7-cyano-7-carbaguanine synthase</fullName>
    </alternativeName>
    <alternativeName>
        <fullName evidence="1">PreQ(0) synthase</fullName>
    </alternativeName>
    <alternativeName>
        <fullName evidence="1">Queuosine biosynthesis protein QueC</fullName>
    </alternativeName>
</protein>
<keyword id="KW-0067">ATP-binding</keyword>
<keyword id="KW-0436">Ligase</keyword>
<keyword id="KW-0479">Metal-binding</keyword>
<keyword id="KW-0547">Nucleotide-binding</keyword>
<keyword id="KW-0671">Queuosine biosynthesis</keyword>
<keyword id="KW-0862">Zinc</keyword>
<organism>
    <name type="scientific">Helicobacter pylori (strain HPAG1)</name>
    <dbReference type="NCBI Taxonomy" id="357544"/>
    <lineage>
        <taxon>Bacteria</taxon>
        <taxon>Pseudomonadati</taxon>
        <taxon>Campylobacterota</taxon>
        <taxon>Epsilonproteobacteria</taxon>
        <taxon>Campylobacterales</taxon>
        <taxon>Helicobacteraceae</taxon>
        <taxon>Helicobacter</taxon>
    </lineage>
</organism>
<feature type="chain" id="PRO_0000255920" description="7-cyano-7-deazaguanine synthase">
    <location>
        <begin position="1"/>
        <end position="228"/>
    </location>
</feature>
<feature type="binding site" evidence="1">
    <location>
        <begin position="10"/>
        <end position="20"/>
    </location>
    <ligand>
        <name>ATP</name>
        <dbReference type="ChEBI" id="CHEBI:30616"/>
    </ligand>
</feature>
<feature type="binding site" evidence="1">
    <location>
        <position position="190"/>
    </location>
    <ligand>
        <name>Zn(2+)</name>
        <dbReference type="ChEBI" id="CHEBI:29105"/>
    </ligand>
</feature>
<feature type="binding site" evidence="1">
    <location>
        <position position="205"/>
    </location>
    <ligand>
        <name>Zn(2+)</name>
        <dbReference type="ChEBI" id="CHEBI:29105"/>
    </ligand>
</feature>
<feature type="binding site" evidence="1">
    <location>
        <position position="208"/>
    </location>
    <ligand>
        <name>Zn(2+)</name>
        <dbReference type="ChEBI" id="CHEBI:29105"/>
    </ligand>
</feature>
<feature type="binding site" evidence="1">
    <location>
        <position position="211"/>
    </location>
    <ligand>
        <name>Zn(2+)</name>
        <dbReference type="ChEBI" id="CHEBI:29105"/>
    </ligand>
</feature>
<gene>
    <name evidence="1" type="primary">queC</name>
    <name type="ordered locus">HPAG1_0622</name>
</gene>
<dbReference type="EC" id="6.3.4.20" evidence="1"/>
<dbReference type="EMBL" id="CP000241">
    <property type="protein sequence ID" value="ABF84689.1"/>
    <property type="molecule type" value="Genomic_DNA"/>
</dbReference>
<dbReference type="RefSeq" id="WP_000434464.1">
    <property type="nucleotide sequence ID" value="NC_008086.1"/>
</dbReference>
<dbReference type="SMR" id="Q1CTN3"/>
<dbReference type="KEGG" id="hpa:HPAG1_0622"/>
<dbReference type="HOGENOM" id="CLU_081854_0_0_7"/>
<dbReference type="UniPathway" id="UPA00391"/>
<dbReference type="GO" id="GO:0005524">
    <property type="term" value="F:ATP binding"/>
    <property type="evidence" value="ECO:0007669"/>
    <property type="project" value="UniProtKB-UniRule"/>
</dbReference>
<dbReference type="GO" id="GO:0016879">
    <property type="term" value="F:ligase activity, forming carbon-nitrogen bonds"/>
    <property type="evidence" value="ECO:0007669"/>
    <property type="project" value="UniProtKB-UniRule"/>
</dbReference>
<dbReference type="GO" id="GO:0008270">
    <property type="term" value="F:zinc ion binding"/>
    <property type="evidence" value="ECO:0007669"/>
    <property type="project" value="UniProtKB-UniRule"/>
</dbReference>
<dbReference type="GO" id="GO:0008616">
    <property type="term" value="P:queuosine biosynthetic process"/>
    <property type="evidence" value="ECO:0007669"/>
    <property type="project" value="UniProtKB-UniRule"/>
</dbReference>
<dbReference type="CDD" id="cd01995">
    <property type="entry name" value="QueC-like"/>
    <property type="match status" value="1"/>
</dbReference>
<dbReference type="FunFam" id="3.40.50.620:FF:000179">
    <property type="entry name" value="7-cyano-7-deazaguanine synthase"/>
    <property type="match status" value="1"/>
</dbReference>
<dbReference type="Gene3D" id="3.40.50.620">
    <property type="entry name" value="HUPs"/>
    <property type="match status" value="1"/>
</dbReference>
<dbReference type="HAMAP" id="MF_01633">
    <property type="entry name" value="QueC"/>
    <property type="match status" value="1"/>
</dbReference>
<dbReference type="InterPro" id="IPR018317">
    <property type="entry name" value="QueC"/>
</dbReference>
<dbReference type="InterPro" id="IPR014729">
    <property type="entry name" value="Rossmann-like_a/b/a_fold"/>
</dbReference>
<dbReference type="NCBIfam" id="TIGR00364">
    <property type="entry name" value="7-cyano-7-deazaguanine synthase QueC"/>
    <property type="match status" value="1"/>
</dbReference>
<dbReference type="PANTHER" id="PTHR42914">
    <property type="entry name" value="7-CYANO-7-DEAZAGUANINE SYNTHASE"/>
    <property type="match status" value="1"/>
</dbReference>
<dbReference type="PANTHER" id="PTHR42914:SF1">
    <property type="entry name" value="7-CYANO-7-DEAZAGUANINE SYNTHASE"/>
    <property type="match status" value="1"/>
</dbReference>
<dbReference type="Pfam" id="PF06508">
    <property type="entry name" value="QueC"/>
    <property type="match status" value="1"/>
</dbReference>
<dbReference type="PIRSF" id="PIRSF006293">
    <property type="entry name" value="ExsB"/>
    <property type="match status" value="1"/>
</dbReference>
<dbReference type="SUPFAM" id="SSF52402">
    <property type="entry name" value="Adenine nucleotide alpha hydrolases-like"/>
    <property type="match status" value="1"/>
</dbReference>